<sequence length="308" mass="32118">MIKISRKEYVSMYGPTTGDKVRLGDTELIAEIEKDYTVYGEEIKFGGGKTIRDGMSQSVSPDVNELDAVITNAMIIDYTGIYKADIGIKDGKIAGIGKAGNRDTQDGVGMDLVVGASTEAIAGEGLIVTAGGIDTHIHFISPTQIPTALYSGVTTMIGGGTGPAAGTFATTISPGEWNIKQMIRAAEEYTMNLGFFGKGNTSNVKALEDQIKAGALGFKVHEDCGSTPAVINHSLDIAEKYDVQVAIHTDTLNEGGAVEDTLAAIGGRTIHTFHTEGAGGGHAPDIIKAAGEANILPASTNPTIPFTK</sequence>
<organism>
    <name type="scientific">Helicobacter mustelae</name>
    <dbReference type="NCBI Taxonomy" id="217"/>
    <lineage>
        <taxon>Bacteria</taxon>
        <taxon>Pseudomonadati</taxon>
        <taxon>Campylobacterota</taxon>
        <taxon>Epsilonproteobacteria</taxon>
        <taxon>Campylobacterales</taxon>
        <taxon>Helicobacteraceae</taxon>
        <taxon>Helicobacter</taxon>
    </lineage>
</organism>
<proteinExistence type="inferred from homology"/>
<dbReference type="EC" id="3.5.1.5"/>
<dbReference type="EMBL" id="L33462">
    <property type="protein sequence ID" value="AAC41484.1"/>
    <property type="molecule type" value="Genomic_DNA"/>
</dbReference>
<dbReference type="SMR" id="P50045"/>
<dbReference type="MEROPS" id="M38.982"/>
<dbReference type="UniPathway" id="UPA00258">
    <property type="reaction ID" value="UER00370"/>
</dbReference>
<dbReference type="GO" id="GO:0005737">
    <property type="term" value="C:cytoplasm"/>
    <property type="evidence" value="ECO:0007669"/>
    <property type="project" value="UniProtKB-SubCell"/>
</dbReference>
<dbReference type="GO" id="GO:0016151">
    <property type="term" value="F:nickel cation binding"/>
    <property type="evidence" value="ECO:0007669"/>
    <property type="project" value="InterPro"/>
</dbReference>
<dbReference type="GO" id="GO:0009039">
    <property type="term" value="F:urease activity"/>
    <property type="evidence" value="ECO:0007669"/>
    <property type="project" value="UniProtKB-EC"/>
</dbReference>
<dbReference type="GO" id="GO:0043419">
    <property type="term" value="P:urea catabolic process"/>
    <property type="evidence" value="ECO:0007669"/>
    <property type="project" value="UniProtKB-UniPathway"/>
</dbReference>
<dbReference type="Gene3D" id="3.20.20.140">
    <property type="entry name" value="Metal-dependent hydrolases"/>
    <property type="match status" value="1"/>
</dbReference>
<dbReference type="Gene3D" id="2.30.40.10">
    <property type="entry name" value="Urease, subunit C, domain 1"/>
    <property type="match status" value="1"/>
</dbReference>
<dbReference type="InterPro" id="IPR006680">
    <property type="entry name" value="Amidohydro-rel"/>
</dbReference>
<dbReference type="InterPro" id="IPR011059">
    <property type="entry name" value="Metal-dep_hydrolase_composite"/>
</dbReference>
<dbReference type="InterPro" id="IPR032466">
    <property type="entry name" value="Metal_Hydrolase"/>
</dbReference>
<dbReference type="InterPro" id="IPR011612">
    <property type="entry name" value="Urease_alpha_N_dom"/>
</dbReference>
<dbReference type="InterPro" id="IPR050112">
    <property type="entry name" value="Urease_alpha_subunit"/>
</dbReference>
<dbReference type="InterPro" id="IPR017951">
    <property type="entry name" value="Urease_asu_c"/>
</dbReference>
<dbReference type="InterPro" id="IPR029754">
    <property type="entry name" value="Urease_Ni-bd"/>
</dbReference>
<dbReference type="NCBIfam" id="NF009686">
    <property type="entry name" value="PRK13207.1"/>
    <property type="match status" value="1"/>
</dbReference>
<dbReference type="PANTHER" id="PTHR43440">
    <property type="entry name" value="UREASE"/>
    <property type="match status" value="1"/>
</dbReference>
<dbReference type="PANTHER" id="PTHR43440:SF1">
    <property type="entry name" value="UREASE"/>
    <property type="match status" value="1"/>
</dbReference>
<dbReference type="Pfam" id="PF01979">
    <property type="entry name" value="Amidohydro_1"/>
    <property type="match status" value="1"/>
</dbReference>
<dbReference type="Pfam" id="PF00449">
    <property type="entry name" value="Urease_alpha"/>
    <property type="match status" value="1"/>
</dbReference>
<dbReference type="SUPFAM" id="SSF51338">
    <property type="entry name" value="Composite domain of metallo-dependent hydrolases"/>
    <property type="match status" value="1"/>
</dbReference>
<dbReference type="SUPFAM" id="SSF51556">
    <property type="entry name" value="Metallo-dependent hydrolases"/>
    <property type="match status" value="1"/>
</dbReference>
<dbReference type="PROSITE" id="PS01120">
    <property type="entry name" value="UREASE_1"/>
    <property type="match status" value="1"/>
</dbReference>
<dbReference type="PROSITE" id="PS51368">
    <property type="entry name" value="UREASE_3"/>
    <property type="match status" value="1"/>
</dbReference>
<accession>P50045</accession>
<feature type="chain" id="PRO_0000067532" description="Urease subunit beta">
    <location>
        <begin position="1"/>
        <end position="308" status="greater than"/>
    </location>
</feature>
<feature type="domain" description="Urease" evidence="2">
    <location>
        <begin position="131"/>
        <end position="308" status="greater than"/>
    </location>
</feature>
<feature type="binding site" evidence="2">
    <location>
        <position position="136"/>
    </location>
    <ligand>
        <name>Ni(2+)</name>
        <dbReference type="ChEBI" id="CHEBI:49786"/>
        <label>2</label>
    </ligand>
</feature>
<feature type="binding site" evidence="2">
    <location>
        <position position="138"/>
    </location>
    <ligand>
        <name>Ni(2+)</name>
        <dbReference type="ChEBI" id="CHEBI:49786"/>
        <label>2</label>
    </ligand>
</feature>
<feature type="binding site" description="via carbamate group" evidence="2">
    <location>
        <position position="219"/>
    </location>
    <ligand>
        <name>Ni(2+)</name>
        <dbReference type="ChEBI" id="CHEBI:49786"/>
        <label>1</label>
    </ligand>
</feature>
<feature type="binding site" description="via carbamate group" evidence="2">
    <location>
        <position position="219"/>
    </location>
    <ligand>
        <name>Ni(2+)</name>
        <dbReference type="ChEBI" id="CHEBI:49786"/>
        <label>2</label>
    </ligand>
</feature>
<feature type="binding site" evidence="2">
    <location>
        <position position="248"/>
    </location>
    <ligand>
        <name>Ni(2+)</name>
        <dbReference type="ChEBI" id="CHEBI:49786"/>
        <label>1</label>
    </ligand>
</feature>
<feature type="binding site" evidence="2">
    <location>
        <position position="274"/>
    </location>
    <ligand>
        <name>Ni(2+)</name>
        <dbReference type="ChEBI" id="CHEBI:49786"/>
        <label>1</label>
    </ligand>
</feature>
<feature type="modified residue" description="N6-carboxylysine" evidence="1">
    <location>
        <position position="219"/>
    </location>
</feature>
<feature type="non-terminal residue">
    <location>
        <position position="308"/>
    </location>
</feature>
<protein>
    <recommendedName>
        <fullName>Urease subunit beta</fullName>
        <ecNumber>3.5.1.5</ecNumber>
    </recommendedName>
    <alternativeName>
        <fullName>Urea amidohydrolase subunit beta</fullName>
    </alternativeName>
</protein>
<comment type="catalytic activity">
    <reaction evidence="2">
        <text>urea + 2 H2O + H(+) = hydrogencarbonate + 2 NH4(+)</text>
        <dbReference type="Rhea" id="RHEA:20557"/>
        <dbReference type="ChEBI" id="CHEBI:15377"/>
        <dbReference type="ChEBI" id="CHEBI:15378"/>
        <dbReference type="ChEBI" id="CHEBI:16199"/>
        <dbReference type="ChEBI" id="CHEBI:17544"/>
        <dbReference type="ChEBI" id="CHEBI:28938"/>
        <dbReference type="EC" id="3.5.1.5"/>
    </reaction>
</comment>
<comment type="cofactor">
    <cofactor evidence="1">
        <name>Ni cation</name>
        <dbReference type="ChEBI" id="CHEBI:25516"/>
    </cofactor>
    <text evidence="1">Binds 2 nickel ions per subunit.</text>
</comment>
<comment type="pathway">
    <text>Nitrogen metabolism; urea degradation; CO(2) and NH(3) from urea (urease route): step 1/1.</text>
</comment>
<comment type="subunit">
    <text evidence="1">Heterohexamer of 3 UreA (alpha) and 3 UreB (beta) subunits.</text>
</comment>
<comment type="subcellular location">
    <subcellularLocation>
        <location evidence="2">Cytoplasm</location>
    </subcellularLocation>
</comment>
<comment type="PTM">
    <text evidence="1">Carboxylation allows a single lysine to coordinate two nickel ions.</text>
</comment>
<comment type="similarity">
    <text>Belongs to the metallo-dependent hydrolases superfamily. Urease alpha subunit family.</text>
</comment>
<comment type="caution">
    <text evidence="3">The orthologous protein is known as the alpha subunit (UreC) in most other bacteria.</text>
</comment>
<evidence type="ECO:0000250" key="1"/>
<evidence type="ECO:0000255" key="2">
    <source>
        <dbReference type="PROSITE-ProRule" id="PRU00700"/>
    </source>
</evidence>
<evidence type="ECO:0000305" key="3"/>
<gene>
    <name type="primary">ureB</name>
</gene>
<reference key="1">
    <citation type="journal article" date="1995" name="Infect. Immun.">
        <title>Construction and characterization of an isogenic urease-negative mutant of Helicobacter mustelae.</title>
        <authorList>
            <person name="Solnick J.V."/>
            <person name="Josenhans C."/>
            <person name="Tompkins L.S."/>
            <person name="Labigne A."/>
        </authorList>
    </citation>
    <scope>NUCLEOTIDE SEQUENCE [GENOMIC DNA]</scope>
    <source>
        <strain>NCTC 12032</strain>
    </source>
</reference>
<keyword id="KW-0963">Cytoplasm</keyword>
<keyword id="KW-0378">Hydrolase</keyword>
<keyword id="KW-0479">Metal-binding</keyword>
<keyword id="KW-0533">Nickel</keyword>
<name>URE1_HELMU</name>